<reference key="1">
    <citation type="journal article" date="2005" name="Nature">
        <title>Genomic sequence of the pathogenic and allergenic filamentous fungus Aspergillus fumigatus.</title>
        <authorList>
            <person name="Nierman W.C."/>
            <person name="Pain A."/>
            <person name="Anderson M.J."/>
            <person name="Wortman J.R."/>
            <person name="Kim H.S."/>
            <person name="Arroyo J."/>
            <person name="Berriman M."/>
            <person name="Abe K."/>
            <person name="Archer D.B."/>
            <person name="Bermejo C."/>
            <person name="Bennett J.W."/>
            <person name="Bowyer P."/>
            <person name="Chen D."/>
            <person name="Collins M."/>
            <person name="Coulsen R."/>
            <person name="Davies R."/>
            <person name="Dyer P.S."/>
            <person name="Farman M.L."/>
            <person name="Fedorova N."/>
            <person name="Fedorova N.D."/>
            <person name="Feldblyum T.V."/>
            <person name="Fischer R."/>
            <person name="Fosker N."/>
            <person name="Fraser A."/>
            <person name="Garcia J.L."/>
            <person name="Garcia M.J."/>
            <person name="Goble A."/>
            <person name="Goldman G.H."/>
            <person name="Gomi K."/>
            <person name="Griffith-Jones S."/>
            <person name="Gwilliam R."/>
            <person name="Haas B.J."/>
            <person name="Haas H."/>
            <person name="Harris D.E."/>
            <person name="Horiuchi H."/>
            <person name="Huang J."/>
            <person name="Humphray S."/>
            <person name="Jimenez J."/>
            <person name="Keller N."/>
            <person name="Khouri H."/>
            <person name="Kitamoto K."/>
            <person name="Kobayashi T."/>
            <person name="Konzack S."/>
            <person name="Kulkarni R."/>
            <person name="Kumagai T."/>
            <person name="Lafton A."/>
            <person name="Latge J.-P."/>
            <person name="Li W."/>
            <person name="Lord A."/>
            <person name="Lu C."/>
            <person name="Majoros W.H."/>
            <person name="May G.S."/>
            <person name="Miller B.L."/>
            <person name="Mohamoud Y."/>
            <person name="Molina M."/>
            <person name="Monod M."/>
            <person name="Mouyna I."/>
            <person name="Mulligan S."/>
            <person name="Murphy L.D."/>
            <person name="O'Neil S."/>
            <person name="Paulsen I."/>
            <person name="Penalva M.A."/>
            <person name="Pertea M."/>
            <person name="Price C."/>
            <person name="Pritchard B.L."/>
            <person name="Quail M.A."/>
            <person name="Rabbinowitsch E."/>
            <person name="Rawlins N."/>
            <person name="Rajandream M.A."/>
            <person name="Reichard U."/>
            <person name="Renauld H."/>
            <person name="Robson G.D."/>
            <person name="Rodriguez de Cordoba S."/>
            <person name="Rodriguez-Pena J.M."/>
            <person name="Ronning C.M."/>
            <person name="Rutter S."/>
            <person name="Salzberg S.L."/>
            <person name="Sanchez M."/>
            <person name="Sanchez-Ferrero J.C."/>
            <person name="Saunders D."/>
            <person name="Seeger K."/>
            <person name="Squares R."/>
            <person name="Squares S."/>
            <person name="Takeuchi M."/>
            <person name="Tekaia F."/>
            <person name="Turner G."/>
            <person name="Vazquez de Aldana C.R."/>
            <person name="Weidman J."/>
            <person name="White O."/>
            <person name="Woodward J.R."/>
            <person name="Yu J.-H."/>
            <person name="Fraser C.M."/>
            <person name="Galagan J.E."/>
            <person name="Asai K."/>
            <person name="Machida M."/>
            <person name="Hall N."/>
            <person name="Barrell B.G."/>
            <person name="Denning D.W."/>
        </authorList>
    </citation>
    <scope>NUCLEOTIDE SEQUENCE [LARGE SCALE GENOMIC DNA]</scope>
    <source>
        <strain>ATCC MYA-4609 / CBS 101355 / FGSC A1100 / Af293</strain>
    </source>
</reference>
<name>RU2A_ASPFU</name>
<protein>
    <recommendedName>
        <fullName>U2 small nuclear ribonucleoprotein A'</fullName>
        <shortName>U2 snRNP A'</shortName>
    </recommendedName>
</protein>
<comment type="function">
    <text evidence="1">Involved in pre-mRNA splicing.</text>
</comment>
<comment type="subunit">
    <text evidence="1">Associated with the spliceosome.</text>
</comment>
<comment type="subcellular location">
    <subcellularLocation>
        <location evidence="1">Nucleus</location>
    </subcellularLocation>
</comment>
<comment type="similarity">
    <text evidence="3">Belongs to the U2 small nuclear ribonucleoprotein A family.</text>
</comment>
<accession>Q4WV66</accession>
<feature type="chain" id="PRO_0000074180" description="U2 small nuclear ribonucleoprotein A'">
    <location>
        <begin position="1"/>
        <end position="253"/>
    </location>
</feature>
<feature type="repeat" description="LRR 1">
    <location>
        <begin position="19"/>
        <end position="40"/>
    </location>
</feature>
<feature type="repeat" description="LRR 2">
    <location>
        <begin position="41"/>
        <end position="62"/>
    </location>
</feature>
<feature type="repeat" description="LRR 3">
    <location>
        <begin position="63"/>
        <end position="84"/>
    </location>
</feature>
<feature type="repeat" description="LRR 4">
    <location>
        <begin position="87"/>
        <end position="108"/>
    </location>
</feature>
<feature type="domain" description="LRRCT">
    <location>
        <begin position="121"/>
        <end position="159"/>
    </location>
</feature>
<feature type="region of interest" description="Disordered" evidence="2">
    <location>
        <begin position="228"/>
        <end position="253"/>
    </location>
</feature>
<feature type="compositionally biased region" description="Acidic residues" evidence="2">
    <location>
        <begin position="241"/>
        <end position="253"/>
    </location>
</feature>
<dbReference type="EMBL" id="AAHF01000003">
    <property type="protein sequence ID" value="EAL91510.1"/>
    <property type="molecule type" value="Genomic_DNA"/>
</dbReference>
<dbReference type="RefSeq" id="XP_753548.1">
    <property type="nucleotide sequence ID" value="XM_748455.1"/>
</dbReference>
<dbReference type="SMR" id="Q4WV66"/>
<dbReference type="FunCoup" id="Q4WV66">
    <property type="interactions" value="1249"/>
</dbReference>
<dbReference type="STRING" id="330879.Q4WV66"/>
<dbReference type="EnsemblFungi" id="EAL91510">
    <property type="protein sequence ID" value="EAL91510"/>
    <property type="gene ID" value="AFUA_5G11000"/>
</dbReference>
<dbReference type="GeneID" id="3510775"/>
<dbReference type="KEGG" id="afm:AFUA_5G11000"/>
<dbReference type="VEuPathDB" id="FungiDB:Afu5g11000"/>
<dbReference type="eggNOG" id="KOG1644">
    <property type="taxonomic scope" value="Eukaryota"/>
</dbReference>
<dbReference type="HOGENOM" id="CLU_061027_1_0_1"/>
<dbReference type="InParanoid" id="Q4WV66"/>
<dbReference type="OMA" id="PNYREYM"/>
<dbReference type="OrthoDB" id="433501at2759"/>
<dbReference type="Proteomes" id="UP000002530">
    <property type="component" value="Chromosome 5"/>
</dbReference>
<dbReference type="GO" id="GO:0071014">
    <property type="term" value="C:post-mRNA release spliceosomal complex"/>
    <property type="evidence" value="ECO:0007669"/>
    <property type="project" value="EnsemblFungi"/>
</dbReference>
<dbReference type="GO" id="GO:0005686">
    <property type="term" value="C:U2 snRNP"/>
    <property type="evidence" value="ECO:0000318"/>
    <property type="project" value="GO_Central"/>
</dbReference>
<dbReference type="GO" id="GO:0030620">
    <property type="term" value="F:U2 snRNA binding"/>
    <property type="evidence" value="ECO:0000318"/>
    <property type="project" value="GO_Central"/>
</dbReference>
<dbReference type="GO" id="GO:0000398">
    <property type="term" value="P:mRNA splicing, via spliceosome"/>
    <property type="evidence" value="ECO:0000318"/>
    <property type="project" value="GO_Central"/>
</dbReference>
<dbReference type="FunFam" id="3.80.10.10:FF:000026">
    <property type="entry name" value="U2 small nuclear ribonucleoprotein A"/>
    <property type="match status" value="1"/>
</dbReference>
<dbReference type="Gene3D" id="3.80.10.10">
    <property type="entry name" value="Ribonuclease Inhibitor"/>
    <property type="match status" value="1"/>
</dbReference>
<dbReference type="InterPro" id="IPR001611">
    <property type="entry name" value="Leu-rich_rpt"/>
</dbReference>
<dbReference type="InterPro" id="IPR032675">
    <property type="entry name" value="LRR_dom_sf"/>
</dbReference>
<dbReference type="InterPro" id="IPR044640">
    <property type="entry name" value="RU2A"/>
</dbReference>
<dbReference type="PANTHER" id="PTHR10552">
    <property type="entry name" value="U2 SMALL NUCLEAR RIBONUCLEOPROTEIN A"/>
    <property type="match status" value="1"/>
</dbReference>
<dbReference type="PANTHER" id="PTHR10552:SF6">
    <property type="entry name" value="U2 SMALL NUCLEAR RIBONUCLEOPROTEIN A"/>
    <property type="match status" value="1"/>
</dbReference>
<dbReference type="Pfam" id="PF14580">
    <property type="entry name" value="LRR_9"/>
    <property type="match status" value="1"/>
</dbReference>
<dbReference type="SUPFAM" id="SSF52058">
    <property type="entry name" value="L domain-like"/>
    <property type="match status" value="1"/>
</dbReference>
<dbReference type="PROSITE" id="PS51450">
    <property type="entry name" value="LRR"/>
    <property type="match status" value="4"/>
</dbReference>
<organism>
    <name type="scientific">Aspergillus fumigatus (strain ATCC MYA-4609 / CBS 101355 / FGSC A1100 / Af293)</name>
    <name type="common">Neosartorya fumigata</name>
    <dbReference type="NCBI Taxonomy" id="330879"/>
    <lineage>
        <taxon>Eukaryota</taxon>
        <taxon>Fungi</taxon>
        <taxon>Dikarya</taxon>
        <taxon>Ascomycota</taxon>
        <taxon>Pezizomycotina</taxon>
        <taxon>Eurotiomycetes</taxon>
        <taxon>Eurotiomycetidae</taxon>
        <taxon>Eurotiales</taxon>
        <taxon>Aspergillaceae</taxon>
        <taxon>Aspergillus</taxon>
        <taxon>Aspergillus subgen. Fumigati</taxon>
    </lineage>
</organism>
<keyword id="KW-0433">Leucine-rich repeat</keyword>
<keyword id="KW-0507">mRNA processing</keyword>
<keyword id="KW-0508">mRNA splicing</keyword>
<keyword id="KW-0539">Nucleus</keyword>
<keyword id="KW-1185">Reference proteome</keyword>
<keyword id="KW-0677">Repeat</keyword>
<keyword id="KW-0747">Spliceosome</keyword>
<sequence>MRLTVELIQNSLSYINPLKDRELDLRGHKIPTIENLGIAKDQDAIDFTDNDISSLGNFPFFPRLHTLLLARNRVKHIQPTIASTIPNLTTLVLTANNMAELADLDPLRNLTRLTHLVLLENPVTRKEHYRYWVIWRIPSVRFLDYQKVKDAERAKAKELFGTAEEPTALASKIMGIKSRTFDVPSGGAERAPADKAVRVKLTEKERKRVEKMIREARSLQEITRLEKELNEGRIPGGALDAGEDSEDENQMQT</sequence>
<proteinExistence type="inferred from homology"/>
<gene>
    <name type="primary">lea1</name>
    <name type="ORF">AFUA_5G11000</name>
</gene>
<evidence type="ECO:0000250" key="1"/>
<evidence type="ECO:0000256" key="2">
    <source>
        <dbReference type="SAM" id="MobiDB-lite"/>
    </source>
</evidence>
<evidence type="ECO:0000305" key="3"/>